<evidence type="ECO:0000255" key="1">
    <source>
        <dbReference type="HAMAP-Rule" id="MF_00823"/>
    </source>
</evidence>
<evidence type="ECO:0000255" key="2">
    <source>
        <dbReference type="PROSITE-ProRule" id="PRU01137"/>
    </source>
</evidence>
<comment type="function">
    <text evidence="1">Component of the acetyl coenzyme A carboxylase (ACC) complex. First, biotin carboxylase catalyzes the carboxylation of biotin on its carrier protein (BCCP) and then the CO(2) group is transferred by the carboxyltransferase to acetyl-CoA to form malonyl-CoA.</text>
</comment>
<comment type="catalytic activity">
    <reaction evidence="1">
        <text>N(6)-carboxybiotinyl-L-lysyl-[protein] + acetyl-CoA = N(6)-biotinyl-L-lysyl-[protein] + malonyl-CoA</text>
        <dbReference type="Rhea" id="RHEA:54728"/>
        <dbReference type="Rhea" id="RHEA-COMP:10505"/>
        <dbReference type="Rhea" id="RHEA-COMP:10506"/>
        <dbReference type="ChEBI" id="CHEBI:57288"/>
        <dbReference type="ChEBI" id="CHEBI:57384"/>
        <dbReference type="ChEBI" id="CHEBI:83144"/>
        <dbReference type="ChEBI" id="CHEBI:83145"/>
        <dbReference type="EC" id="2.1.3.15"/>
    </reaction>
</comment>
<comment type="pathway">
    <text evidence="1">Lipid metabolism; malonyl-CoA biosynthesis; malonyl-CoA from acetyl-CoA: step 1/1.</text>
</comment>
<comment type="subunit">
    <text evidence="1">Acetyl-CoA carboxylase is a heterohexamer composed of biotin carboxyl carrier protein (AccB), biotin carboxylase (AccC) and two subunits each of ACCase subunit alpha (AccA) and ACCase subunit beta (AccD).</text>
</comment>
<comment type="subcellular location">
    <subcellularLocation>
        <location evidence="1">Cytoplasm</location>
    </subcellularLocation>
</comment>
<comment type="similarity">
    <text evidence="1">Belongs to the AccA family.</text>
</comment>
<keyword id="KW-0067">ATP-binding</keyword>
<keyword id="KW-0963">Cytoplasm</keyword>
<keyword id="KW-0275">Fatty acid biosynthesis</keyword>
<keyword id="KW-0276">Fatty acid metabolism</keyword>
<keyword id="KW-0444">Lipid biosynthesis</keyword>
<keyword id="KW-0443">Lipid metabolism</keyword>
<keyword id="KW-0547">Nucleotide-binding</keyword>
<keyword id="KW-0808">Transferase</keyword>
<dbReference type="EC" id="2.1.3.15" evidence="1"/>
<dbReference type="EMBL" id="BX569693">
    <property type="protein sequence ID" value="CAE08251.1"/>
    <property type="molecule type" value="Genomic_DNA"/>
</dbReference>
<dbReference type="RefSeq" id="WP_011128596.1">
    <property type="nucleotide sequence ID" value="NC_005070.1"/>
</dbReference>
<dbReference type="SMR" id="Q7U5H1"/>
<dbReference type="STRING" id="84588.SYNW1736"/>
<dbReference type="KEGG" id="syw:SYNW1736"/>
<dbReference type="eggNOG" id="COG0825">
    <property type="taxonomic scope" value="Bacteria"/>
</dbReference>
<dbReference type="HOGENOM" id="CLU_015486_0_2_3"/>
<dbReference type="UniPathway" id="UPA00655">
    <property type="reaction ID" value="UER00711"/>
</dbReference>
<dbReference type="Proteomes" id="UP000001422">
    <property type="component" value="Chromosome"/>
</dbReference>
<dbReference type="GO" id="GO:0009317">
    <property type="term" value="C:acetyl-CoA carboxylase complex"/>
    <property type="evidence" value="ECO:0007669"/>
    <property type="project" value="InterPro"/>
</dbReference>
<dbReference type="GO" id="GO:0003989">
    <property type="term" value="F:acetyl-CoA carboxylase activity"/>
    <property type="evidence" value="ECO:0007669"/>
    <property type="project" value="InterPro"/>
</dbReference>
<dbReference type="GO" id="GO:0005524">
    <property type="term" value="F:ATP binding"/>
    <property type="evidence" value="ECO:0007669"/>
    <property type="project" value="UniProtKB-KW"/>
</dbReference>
<dbReference type="GO" id="GO:0016743">
    <property type="term" value="F:carboxyl- or carbamoyltransferase activity"/>
    <property type="evidence" value="ECO:0007669"/>
    <property type="project" value="UniProtKB-UniRule"/>
</dbReference>
<dbReference type="GO" id="GO:0006633">
    <property type="term" value="P:fatty acid biosynthetic process"/>
    <property type="evidence" value="ECO:0007669"/>
    <property type="project" value="UniProtKB-KW"/>
</dbReference>
<dbReference type="GO" id="GO:2001295">
    <property type="term" value="P:malonyl-CoA biosynthetic process"/>
    <property type="evidence" value="ECO:0007669"/>
    <property type="project" value="UniProtKB-UniRule"/>
</dbReference>
<dbReference type="Gene3D" id="3.90.226.10">
    <property type="entry name" value="2-enoyl-CoA Hydratase, Chain A, domain 1"/>
    <property type="match status" value="1"/>
</dbReference>
<dbReference type="HAMAP" id="MF_00823">
    <property type="entry name" value="AcetylCoA_CT_alpha"/>
    <property type="match status" value="1"/>
</dbReference>
<dbReference type="InterPro" id="IPR001095">
    <property type="entry name" value="Acetyl_CoA_COase_a_su"/>
</dbReference>
<dbReference type="InterPro" id="IPR029045">
    <property type="entry name" value="ClpP/crotonase-like_dom_sf"/>
</dbReference>
<dbReference type="InterPro" id="IPR011763">
    <property type="entry name" value="COA_CT_C"/>
</dbReference>
<dbReference type="NCBIfam" id="TIGR00513">
    <property type="entry name" value="accA"/>
    <property type="match status" value="1"/>
</dbReference>
<dbReference type="NCBIfam" id="NF041504">
    <property type="entry name" value="AccA_sub"/>
    <property type="match status" value="1"/>
</dbReference>
<dbReference type="NCBIfam" id="NF004344">
    <property type="entry name" value="PRK05724.1"/>
    <property type="match status" value="1"/>
</dbReference>
<dbReference type="PANTHER" id="PTHR42853">
    <property type="entry name" value="ACETYL-COENZYME A CARBOXYLASE CARBOXYL TRANSFERASE SUBUNIT ALPHA"/>
    <property type="match status" value="1"/>
</dbReference>
<dbReference type="PANTHER" id="PTHR42853:SF3">
    <property type="entry name" value="ACETYL-COENZYME A CARBOXYLASE CARBOXYL TRANSFERASE SUBUNIT ALPHA, CHLOROPLASTIC"/>
    <property type="match status" value="1"/>
</dbReference>
<dbReference type="Pfam" id="PF03255">
    <property type="entry name" value="ACCA"/>
    <property type="match status" value="1"/>
</dbReference>
<dbReference type="PRINTS" id="PR01069">
    <property type="entry name" value="ACCCTRFRASEA"/>
</dbReference>
<dbReference type="SUPFAM" id="SSF52096">
    <property type="entry name" value="ClpP/crotonase"/>
    <property type="match status" value="1"/>
</dbReference>
<dbReference type="PROSITE" id="PS50989">
    <property type="entry name" value="COA_CT_CTER"/>
    <property type="match status" value="1"/>
</dbReference>
<accession>Q7U5H1</accession>
<gene>
    <name evidence="1" type="primary">accA</name>
    <name type="ordered locus">SYNW1736</name>
</gene>
<feature type="chain" id="PRO_0000223842" description="Acetyl-coenzyme A carboxylase carboxyl transferase subunit alpha">
    <location>
        <begin position="1"/>
        <end position="329"/>
    </location>
</feature>
<feature type="domain" description="CoA carboxyltransferase C-terminal" evidence="2">
    <location>
        <begin position="40"/>
        <end position="294"/>
    </location>
</feature>
<proteinExistence type="inferred from homology"/>
<name>ACCA_PARMW</name>
<sequence length="329" mass="36419">MPRRPLLEFEKPLVELEQQIEQIRQLARDSEVDVSQQLHQLESLAARRRQEIFQGLTPAQKIQVARHPHRPSTLDFIQMFCDDWIELHGDRRGNDDQALVGGVGRLGDQPVLLIGHQKGRDTKENVARNFGMATPGGYRKAMRLMEHADRFRLPILSFIDTPGAYAGLQAEEQGQGEAIAVNLREMFRLRVPVIATVIGEGGSGGALGIGVADRLLMFEHSVYTVASPEACASILWRDAAKAPDAATALRITGVDLLELGVVDEVLEEPSGGNNWAPLEAGQTLRAALERHLGELLALSERELKEGRYRKFRAMGRFVEGNSQNPGKID</sequence>
<organism>
    <name type="scientific">Parasynechococcus marenigrum (strain WH8102)</name>
    <dbReference type="NCBI Taxonomy" id="84588"/>
    <lineage>
        <taxon>Bacteria</taxon>
        <taxon>Bacillati</taxon>
        <taxon>Cyanobacteriota</taxon>
        <taxon>Cyanophyceae</taxon>
        <taxon>Synechococcales</taxon>
        <taxon>Prochlorococcaceae</taxon>
        <taxon>Parasynechococcus</taxon>
        <taxon>Parasynechococcus marenigrum</taxon>
    </lineage>
</organism>
<reference key="1">
    <citation type="journal article" date="2003" name="Nature">
        <title>The genome of a motile marine Synechococcus.</title>
        <authorList>
            <person name="Palenik B."/>
            <person name="Brahamsha B."/>
            <person name="Larimer F.W."/>
            <person name="Land M.L."/>
            <person name="Hauser L."/>
            <person name="Chain P."/>
            <person name="Lamerdin J.E."/>
            <person name="Regala W."/>
            <person name="Allen E.E."/>
            <person name="McCarren J."/>
            <person name="Paulsen I.T."/>
            <person name="Dufresne A."/>
            <person name="Partensky F."/>
            <person name="Webb E.A."/>
            <person name="Waterbury J."/>
        </authorList>
    </citation>
    <scope>NUCLEOTIDE SEQUENCE [LARGE SCALE GENOMIC DNA]</scope>
    <source>
        <strain>WH8102</strain>
    </source>
</reference>
<protein>
    <recommendedName>
        <fullName evidence="1">Acetyl-coenzyme A carboxylase carboxyl transferase subunit alpha</fullName>
        <shortName evidence="1">ACCase subunit alpha</shortName>
        <shortName evidence="1">Acetyl-CoA carboxylase carboxyltransferase subunit alpha</shortName>
        <ecNumber evidence="1">2.1.3.15</ecNumber>
    </recommendedName>
</protein>